<gene>
    <name evidence="1" type="primary">fhs</name>
    <name type="ordered locus">VC_A0614</name>
</gene>
<organism>
    <name type="scientific">Vibrio cholerae serotype O1 (strain ATCC 39315 / El Tor Inaba N16961)</name>
    <dbReference type="NCBI Taxonomy" id="243277"/>
    <lineage>
        <taxon>Bacteria</taxon>
        <taxon>Pseudomonadati</taxon>
        <taxon>Pseudomonadota</taxon>
        <taxon>Gammaproteobacteria</taxon>
        <taxon>Vibrionales</taxon>
        <taxon>Vibrionaceae</taxon>
        <taxon>Vibrio</taxon>
    </lineage>
</organism>
<sequence length="582" mass="62074">MLPDIEICRATPLAPIDTIAQKAGLHANEYESHGQHKAKVSLHCLERLANKPKGKFILVTAITPTPLGEGKTVTTIGLAQGLAKLNHSVMACIRQPSMGPIFGVKGGAAGGGYSQVAPMEELNLHLTGDIHAVTAAHNLAAAAIDARIYHEQRLGYADFERRTGMPALRIDPKQVIWKRVMDHNDRALRMVTVGRNEPGKNINGYEREDGFDISAASELMAILALASDLRDLRRRIGNVVLAYDLDGNPVTTEDLKVAGAMAVSMKEAIEPTLMQTLEGVPTLIHAGPFANIAHGNSSIIADEIATRLADYTVTEGGFGSDMGFEKACNIKAKASGKTPDCAVIVATLRGLKANSGLYDLRPGQAVPDALFAPDSAALQAGFANLKWHIDNVNQYGVPAVVAINRFPQDCAEELEQLVKLIEALPNRVSVAISEGFAKGGEGTKLLAEKVVEQCQHPTKFTPLYDSGIPLDEKLKAVAVKGYGAAEIALSDKAAQQLAKLQTQGFDHLAVCLAKTPLSISTDPAIKGAPRDFIVPIRELRLCAGAEFVYALCGSVMTMPGLPEKPSFMALDIDQHGNIVGLS</sequence>
<name>FTHS_VIBCH</name>
<accession>Q9KLX7</accession>
<proteinExistence type="inferred from homology"/>
<protein>
    <recommendedName>
        <fullName evidence="1">Formate--tetrahydrofolate ligase</fullName>
        <ecNumber evidence="1">6.3.4.3</ecNumber>
    </recommendedName>
    <alternativeName>
        <fullName evidence="1">Formyltetrahydrofolate synthetase</fullName>
        <shortName evidence="1">FHS</shortName>
        <shortName evidence="1">FTHFS</shortName>
    </alternativeName>
</protein>
<keyword id="KW-0067">ATP-binding</keyword>
<keyword id="KW-0436">Ligase</keyword>
<keyword id="KW-0547">Nucleotide-binding</keyword>
<keyword id="KW-0554">One-carbon metabolism</keyword>
<keyword id="KW-1185">Reference proteome</keyword>
<reference key="1">
    <citation type="journal article" date="2000" name="Nature">
        <title>DNA sequence of both chromosomes of the cholera pathogen Vibrio cholerae.</title>
        <authorList>
            <person name="Heidelberg J.F."/>
            <person name="Eisen J.A."/>
            <person name="Nelson W.C."/>
            <person name="Clayton R.A."/>
            <person name="Gwinn M.L."/>
            <person name="Dodson R.J."/>
            <person name="Haft D.H."/>
            <person name="Hickey E.K."/>
            <person name="Peterson J.D."/>
            <person name="Umayam L.A."/>
            <person name="Gill S.R."/>
            <person name="Nelson K.E."/>
            <person name="Read T.D."/>
            <person name="Tettelin H."/>
            <person name="Richardson D.L."/>
            <person name="Ermolaeva M.D."/>
            <person name="Vamathevan J.J."/>
            <person name="Bass S."/>
            <person name="Qin H."/>
            <person name="Dragoi I."/>
            <person name="Sellers P."/>
            <person name="McDonald L.A."/>
            <person name="Utterback T.R."/>
            <person name="Fleischmann R.D."/>
            <person name="Nierman W.C."/>
            <person name="White O."/>
            <person name="Salzberg S.L."/>
            <person name="Smith H.O."/>
            <person name="Colwell R.R."/>
            <person name="Mekalanos J.J."/>
            <person name="Venter J.C."/>
            <person name="Fraser C.M."/>
        </authorList>
    </citation>
    <scope>NUCLEOTIDE SEQUENCE [LARGE SCALE GENOMIC DNA]</scope>
    <source>
        <strain>ATCC 39315 / El Tor Inaba N16961</strain>
    </source>
</reference>
<dbReference type="EC" id="6.3.4.3" evidence="1"/>
<dbReference type="EMBL" id="AE003853">
    <property type="protein sequence ID" value="AAF96515.1"/>
    <property type="status" value="ALT_INIT"/>
    <property type="molecule type" value="Genomic_DNA"/>
</dbReference>
<dbReference type="PIR" id="B82439">
    <property type="entry name" value="B82439"/>
</dbReference>
<dbReference type="RefSeq" id="NP_233003.2">
    <property type="nucleotide sequence ID" value="NC_002506.1"/>
</dbReference>
<dbReference type="RefSeq" id="WP_000936297.1">
    <property type="nucleotide sequence ID" value="NZ_LT906615.1"/>
</dbReference>
<dbReference type="SMR" id="Q9KLX7"/>
<dbReference type="STRING" id="243277.VC_A0614"/>
<dbReference type="DNASU" id="2612837"/>
<dbReference type="EnsemblBacteria" id="AAF96515">
    <property type="protein sequence ID" value="AAF96515"/>
    <property type="gene ID" value="VC_A0614"/>
</dbReference>
<dbReference type="KEGG" id="vch:VC_A0614"/>
<dbReference type="PATRIC" id="fig|243277.26.peg.3242"/>
<dbReference type="eggNOG" id="COG2759">
    <property type="taxonomic scope" value="Bacteria"/>
</dbReference>
<dbReference type="HOGENOM" id="CLU_003601_3_3_6"/>
<dbReference type="UniPathway" id="UPA00193"/>
<dbReference type="Proteomes" id="UP000000584">
    <property type="component" value="Chromosome 2"/>
</dbReference>
<dbReference type="GO" id="GO:0005524">
    <property type="term" value="F:ATP binding"/>
    <property type="evidence" value="ECO:0007669"/>
    <property type="project" value="UniProtKB-UniRule"/>
</dbReference>
<dbReference type="GO" id="GO:0004329">
    <property type="term" value="F:formate-tetrahydrofolate ligase activity"/>
    <property type="evidence" value="ECO:0007669"/>
    <property type="project" value="UniProtKB-UniRule"/>
</dbReference>
<dbReference type="GO" id="GO:0035999">
    <property type="term" value="P:tetrahydrofolate interconversion"/>
    <property type="evidence" value="ECO:0007669"/>
    <property type="project" value="UniProtKB-UniRule"/>
</dbReference>
<dbReference type="CDD" id="cd00477">
    <property type="entry name" value="FTHFS"/>
    <property type="match status" value="1"/>
</dbReference>
<dbReference type="FunFam" id="3.40.50.300:FF:000245">
    <property type="entry name" value="C-1-tetrahydrofolate synthase, cytoplasmic"/>
    <property type="match status" value="1"/>
</dbReference>
<dbReference type="FunFam" id="3.30.1510.10:FF:000001">
    <property type="entry name" value="Formate--tetrahydrofolate ligase"/>
    <property type="match status" value="1"/>
</dbReference>
<dbReference type="FunFam" id="3.10.410.10:FF:000001">
    <property type="entry name" value="Putative formate--tetrahydrofolate ligase"/>
    <property type="match status" value="1"/>
</dbReference>
<dbReference type="Gene3D" id="3.30.1510.10">
    <property type="entry name" value="Domain 2, N(10)-formyltetrahydrofolate synthetase"/>
    <property type="match status" value="1"/>
</dbReference>
<dbReference type="Gene3D" id="3.10.410.10">
    <property type="entry name" value="Formyltetrahydrofolate synthetase, domain 3"/>
    <property type="match status" value="1"/>
</dbReference>
<dbReference type="Gene3D" id="3.40.50.300">
    <property type="entry name" value="P-loop containing nucleotide triphosphate hydrolases"/>
    <property type="match status" value="1"/>
</dbReference>
<dbReference type="HAMAP" id="MF_01543">
    <property type="entry name" value="FTHFS"/>
    <property type="match status" value="1"/>
</dbReference>
<dbReference type="InterPro" id="IPR000559">
    <property type="entry name" value="Formate_THF_ligase"/>
</dbReference>
<dbReference type="InterPro" id="IPR020628">
    <property type="entry name" value="Formate_THF_ligase_CS"/>
</dbReference>
<dbReference type="InterPro" id="IPR027417">
    <property type="entry name" value="P-loop_NTPase"/>
</dbReference>
<dbReference type="NCBIfam" id="NF010030">
    <property type="entry name" value="PRK13505.1"/>
    <property type="match status" value="1"/>
</dbReference>
<dbReference type="NCBIfam" id="NF010031">
    <property type="entry name" value="PRK13506.1"/>
    <property type="match status" value="1"/>
</dbReference>
<dbReference type="Pfam" id="PF01268">
    <property type="entry name" value="FTHFS"/>
    <property type="match status" value="1"/>
</dbReference>
<dbReference type="SUPFAM" id="SSF52540">
    <property type="entry name" value="P-loop containing nucleoside triphosphate hydrolases"/>
    <property type="match status" value="1"/>
</dbReference>
<dbReference type="PROSITE" id="PS00721">
    <property type="entry name" value="FTHFS_1"/>
    <property type="match status" value="1"/>
</dbReference>
<dbReference type="PROSITE" id="PS00722">
    <property type="entry name" value="FTHFS_2"/>
    <property type="match status" value="1"/>
</dbReference>
<comment type="catalytic activity">
    <reaction evidence="1">
        <text>(6S)-5,6,7,8-tetrahydrofolate + formate + ATP = (6R)-10-formyltetrahydrofolate + ADP + phosphate</text>
        <dbReference type="Rhea" id="RHEA:20221"/>
        <dbReference type="ChEBI" id="CHEBI:15740"/>
        <dbReference type="ChEBI" id="CHEBI:30616"/>
        <dbReference type="ChEBI" id="CHEBI:43474"/>
        <dbReference type="ChEBI" id="CHEBI:57453"/>
        <dbReference type="ChEBI" id="CHEBI:195366"/>
        <dbReference type="ChEBI" id="CHEBI:456216"/>
        <dbReference type="EC" id="6.3.4.3"/>
    </reaction>
</comment>
<comment type="pathway">
    <text evidence="1">One-carbon metabolism; tetrahydrofolate interconversion.</text>
</comment>
<comment type="similarity">
    <text evidence="1">Belongs to the formate--tetrahydrofolate ligase family.</text>
</comment>
<comment type="sequence caution" evidence="2">
    <conflict type="erroneous initiation">
        <sequence resource="EMBL-CDS" id="AAF96515"/>
    </conflict>
</comment>
<evidence type="ECO:0000255" key="1">
    <source>
        <dbReference type="HAMAP-Rule" id="MF_01543"/>
    </source>
</evidence>
<evidence type="ECO:0000305" key="2"/>
<feature type="chain" id="PRO_0000199407" description="Formate--tetrahydrofolate ligase">
    <location>
        <begin position="1"/>
        <end position="582"/>
    </location>
</feature>
<feature type="binding site" evidence="1">
    <location>
        <begin position="65"/>
        <end position="72"/>
    </location>
    <ligand>
        <name>ATP</name>
        <dbReference type="ChEBI" id="CHEBI:30616"/>
    </ligand>
</feature>